<proteinExistence type="inferred from homology"/>
<name>DCUP_CAUVN</name>
<evidence type="ECO:0000250" key="1"/>
<evidence type="ECO:0000305" key="2"/>
<keyword id="KW-0963">Cytoplasm</keyword>
<keyword id="KW-0210">Decarboxylase</keyword>
<keyword id="KW-0456">Lyase</keyword>
<keyword id="KW-0627">Porphyrin biosynthesis</keyword>
<keyword id="KW-1185">Reference proteome</keyword>
<sequence>MTSSSPILKQTPKFLSALEGQSHANPPVWFMRQAGRYLPEYRAVRATAPDFISFCFDPEKAAEVTLQPMRRFPFDASIVFADILLIPGALGQKVWFEAGEGPKLGDMPSVESMAEKAGEAGKALSLVGETLTRVRSALDPDKALIGFAGAPWTVATYMIEKGSSDRSGARTFAYQNPETLDALIQVLVDATIDYLAMQVDAGAQALKLFESWAEGLSEPLFDRLVTQPHIRIIEGLRARGVTVPIIGFPRGAGTLVEDYAARTPVQGVALDTSASAKLGQTIQKTKTIQGALDPLLLRAGGDALLKRVDEMLEQWNQGPYIFNLGHGILPDTPIAHVEAVLERVTGQKVGQ</sequence>
<reference key="1">
    <citation type="journal article" date="2010" name="J. Bacteriol.">
        <title>The genetic basis of laboratory adaptation in Caulobacter crescentus.</title>
        <authorList>
            <person name="Marks M.E."/>
            <person name="Castro-Rojas C.M."/>
            <person name="Teiling C."/>
            <person name="Du L."/>
            <person name="Kapatral V."/>
            <person name="Walunas T.L."/>
            <person name="Crosson S."/>
        </authorList>
    </citation>
    <scope>NUCLEOTIDE SEQUENCE [LARGE SCALE GENOMIC DNA]</scope>
    <source>
        <strain>NA1000 / CB15N</strain>
    </source>
</reference>
<reference key="2">
    <citation type="submission" date="1994-08" db="EMBL/GenBank/DDBJ databases">
        <authorList>
            <person name="Marczynski G.T."/>
        </authorList>
    </citation>
    <scope>NUCLEOTIDE SEQUENCE [GENOMIC DNA] OF 1-294</scope>
</reference>
<feature type="chain" id="PRO_0000378316" description="Uroporphyrinogen decarboxylase">
    <location>
        <begin position="1"/>
        <end position="351"/>
    </location>
</feature>
<feature type="binding site" evidence="1">
    <location>
        <begin position="32"/>
        <end position="36"/>
    </location>
    <ligand>
        <name>substrate</name>
    </ligand>
</feature>
<feature type="binding site" evidence="1">
    <location>
        <position position="51"/>
    </location>
    <ligand>
        <name>substrate</name>
    </ligand>
</feature>
<feature type="binding site" evidence="1">
    <location>
        <position position="82"/>
    </location>
    <ligand>
        <name>substrate</name>
    </ligand>
</feature>
<feature type="binding site" evidence="1">
    <location>
        <position position="157"/>
    </location>
    <ligand>
        <name>substrate</name>
    </ligand>
</feature>
<feature type="binding site" evidence="1">
    <location>
        <position position="211"/>
    </location>
    <ligand>
        <name>substrate</name>
    </ligand>
</feature>
<feature type="binding site" evidence="1">
    <location>
        <position position="326"/>
    </location>
    <ligand>
        <name>substrate</name>
    </ligand>
</feature>
<feature type="site" description="Transition state stabilizer" evidence="1">
    <location>
        <position position="82"/>
    </location>
</feature>
<feature type="sequence conflict" description="In Ref. 2; AAA64267." evidence="2" ref="2">
    <original>DR</original>
    <variation>EP</variation>
    <location>
        <begin position="222"/>
        <end position="223"/>
    </location>
</feature>
<protein>
    <recommendedName>
        <fullName>Uroporphyrinogen decarboxylase</fullName>
        <shortName>UPD</shortName>
        <shortName>URO-D</shortName>
        <ecNumber>4.1.1.37</ecNumber>
    </recommendedName>
</protein>
<gene>
    <name type="primary">hemE</name>
    <name type="ordered locus">CCNA_03879</name>
</gene>
<dbReference type="EC" id="4.1.1.37"/>
<dbReference type="EMBL" id="CP001340">
    <property type="protein sequence ID" value="ACL97344.2"/>
    <property type="molecule type" value="Genomic_DNA"/>
</dbReference>
<dbReference type="EMBL" id="U13664">
    <property type="protein sequence ID" value="AAA64267.1"/>
    <property type="molecule type" value="Genomic_DNA"/>
</dbReference>
<dbReference type="PIR" id="I40672">
    <property type="entry name" value="I40672"/>
</dbReference>
<dbReference type="RefSeq" id="WP_010921590.1">
    <property type="nucleotide sequence ID" value="NC_011916.1"/>
</dbReference>
<dbReference type="RefSeq" id="YP_002519252.2">
    <property type="nucleotide sequence ID" value="NC_011916.1"/>
</dbReference>
<dbReference type="SMR" id="B8GW41"/>
<dbReference type="GeneID" id="7332727"/>
<dbReference type="KEGG" id="ccs:CCNA_03879"/>
<dbReference type="PATRIC" id="fig|565050.3.peg.3784"/>
<dbReference type="HOGENOM" id="CLU_040933_0_0_5"/>
<dbReference type="OrthoDB" id="9806656at2"/>
<dbReference type="PhylomeDB" id="B8GW41"/>
<dbReference type="UniPathway" id="UPA00251">
    <property type="reaction ID" value="UER00321"/>
</dbReference>
<dbReference type="Proteomes" id="UP000001364">
    <property type="component" value="Chromosome"/>
</dbReference>
<dbReference type="GO" id="GO:0005829">
    <property type="term" value="C:cytosol"/>
    <property type="evidence" value="ECO:0007669"/>
    <property type="project" value="TreeGrafter"/>
</dbReference>
<dbReference type="GO" id="GO:0004853">
    <property type="term" value="F:uroporphyrinogen decarboxylase activity"/>
    <property type="evidence" value="ECO:0007669"/>
    <property type="project" value="UniProtKB-UniRule"/>
</dbReference>
<dbReference type="GO" id="GO:0019353">
    <property type="term" value="P:protoporphyrinogen IX biosynthetic process from glutamate"/>
    <property type="evidence" value="ECO:0007669"/>
    <property type="project" value="TreeGrafter"/>
</dbReference>
<dbReference type="CDD" id="cd00717">
    <property type="entry name" value="URO-D"/>
    <property type="match status" value="1"/>
</dbReference>
<dbReference type="Gene3D" id="3.20.20.210">
    <property type="match status" value="1"/>
</dbReference>
<dbReference type="HAMAP" id="MF_00218">
    <property type="entry name" value="URO_D"/>
    <property type="match status" value="1"/>
</dbReference>
<dbReference type="InterPro" id="IPR038071">
    <property type="entry name" value="UROD/MetE-like_sf"/>
</dbReference>
<dbReference type="InterPro" id="IPR006361">
    <property type="entry name" value="Uroporphyrinogen_deCO2ase_HemE"/>
</dbReference>
<dbReference type="InterPro" id="IPR000257">
    <property type="entry name" value="Uroporphyrinogen_deCOase"/>
</dbReference>
<dbReference type="NCBIfam" id="TIGR01464">
    <property type="entry name" value="hemE"/>
    <property type="match status" value="1"/>
</dbReference>
<dbReference type="PANTHER" id="PTHR21091">
    <property type="entry name" value="METHYLTETRAHYDROFOLATE:HOMOCYSTEINE METHYLTRANSFERASE RELATED"/>
    <property type="match status" value="1"/>
</dbReference>
<dbReference type="PANTHER" id="PTHR21091:SF169">
    <property type="entry name" value="UROPORPHYRINOGEN DECARBOXYLASE"/>
    <property type="match status" value="1"/>
</dbReference>
<dbReference type="Pfam" id="PF01208">
    <property type="entry name" value="URO-D"/>
    <property type="match status" value="1"/>
</dbReference>
<dbReference type="SUPFAM" id="SSF51726">
    <property type="entry name" value="UROD/MetE-like"/>
    <property type="match status" value="1"/>
</dbReference>
<dbReference type="PROSITE" id="PS00906">
    <property type="entry name" value="UROD_1"/>
    <property type="match status" value="1"/>
</dbReference>
<dbReference type="PROSITE" id="PS00907">
    <property type="entry name" value="UROD_2"/>
    <property type="match status" value="1"/>
</dbReference>
<comment type="function">
    <text evidence="1">Catalyzes the decarboxylation of four acetate groups of uroporphyrinogen III to yield coproporphyrinogen III.</text>
</comment>
<comment type="catalytic activity">
    <reaction>
        <text>uroporphyrinogen III + 4 H(+) = coproporphyrinogen III + 4 CO2</text>
        <dbReference type="Rhea" id="RHEA:19865"/>
        <dbReference type="ChEBI" id="CHEBI:15378"/>
        <dbReference type="ChEBI" id="CHEBI:16526"/>
        <dbReference type="ChEBI" id="CHEBI:57308"/>
        <dbReference type="ChEBI" id="CHEBI:57309"/>
        <dbReference type="EC" id="4.1.1.37"/>
    </reaction>
</comment>
<comment type="pathway">
    <text>Porphyrin-containing compound metabolism; protoporphyrin-IX biosynthesis; coproporphyrinogen-III from 5-aminolevulinate: step 4/4.</text>
</comment>
<comment type="subunit">
    <text evidence="1">Homodimer.</text>
</comment>
<comment type="subcellular location">
    <subcellularLocation>
        <location evidence="1">Cytoplasm</location>
    </subcellularLocation>
</comment>
<comment type="similarity">
    <text evidence="2">Belongs to the uroporphyrinogen decarboxylase family.</text>
</comment>
<accession>B8GW41</accession>
<accession>Q59269</accession>
<organism>
    <name type="scientific">Caulobacter vibrioides (strain NA1000 / CB15N)</name>
    <name type="common">Caulobacter crescentus</name>
    <dbReference type="NCBI Taxonomy" id="565050"/>
    <lineage>
        <taxon>Bacteria</taxon>
        <taxon>Pseudomonadati</taxon>
        <taxon>Pseudomonadota</taxon>
        <taxon>Alphaproteobacteria</taxon>
        <taxon>Caulobacterales</taxon>
        <taxon>Caulobacteraceae</taxon>
        <taxon>Caulobacter</taxon>
    </lineage>
</organism>